<gene>
    <name type="primary">arcA</name>
    <name type="ordered locus">LL2037</name>
    <name type="ORF">L0329</name>
</gene>
<accession>P58013</accession>
<accession>Q9CE13</accession>
<reference key="1">
    <citation type="journal article" date="2001" name="Genome Res.">
        <title>The complete genome sequence of the lactic acid bacterium Lactococcus lactis ssp. lactis IL1403.</title>
        <authorList>
            <person name="Bolotin A."/>
            <person name="Wincker P."/>
            <person name="Mauger S."/>
            <person name="Jaillon O."/>
            <person name="Malarme K."/>
            <person name="Weissenbach J."/>
            <person name="Ehrlich S.D."/>
            <person name="Sorokin A."/>
        </authorList>
    </citation>
    <scope>NUCLEOTIDE SEQUENCE [LARGE SCALE GENOMIC DNA]</scope>
    <source>
        <strain>IL1403</strain>
    </source>
</reference>
<keyword id="KW-0056">Arginine metabolism</keyword>
<keyword id="KW-0963">Cytoplasm</keyword>
<keyword id="KW-0378">Hydrolase</keyword>
<keyword id="KW-1185">Reference proteome</keyword>
<evidence type="ECO:0000250" key="1"/>
<evidence type="ECO:0000305" key="2"/>
<sequence>MNNGINVNSEIGKLKSVLLHRPGAEVENITPDTMKQLLFDDIPYLKIAQKEHDFFAQTLRDNGAETVYIENLATEVFEKSSETKEEFLSHLLHEAGYRPGRTYDGLTEYLTSMSTKDMVEKIYAGVRKNELDIKRTALSDMAGSDAENYFYLNPLPNAYFTRDPQASMGVGMTINKMTFPARQPESLITEYVMANHPRFKDTPIWRDRNHTTRIEGGDELILNKTTVAIGVSERTSSKTIQNLAKELFANPLSTFDTVLAVEIPHNHAMMHLDTVFTMINHDQFTVFPGIMDGAGNINVFILRPGKDDEVEIEHLTDLKAALKKVLNLSELDLIECGAGDPIAAPREQWNDGSNTLAIAPGEIVTYDRNYVTVELLKEHGIKVHEILSSELGRGRGGARCMSQPLWREDL</sequence>
<comment type="catalytic activity">
    <reaction>
        <text>L-arginine + H2O = L-citrulline + NH4(+)</text>
        <dbReference type="Rhea" id="RHEA:19597"/>
        <dbReference type="ChEBI" id="CHEBI:15377"/>
        <dbReference type="ChEBI" id="CHEBI:28938"/>
        <dbReference type="ChEBI" id="CHEBI:32682"/>
        <dbReference type="ChEBI" id="CHEBI:57743"/>
        <dbReference type="EC" id="3.5.3.6"/>
    </reaction>
</comment>
<comment type="pathway">
    <text>Amino-acid degradation; L-arginine degradation via ADI pathway; carbamoyl phosphate from L-arginine: step 1/2.</text>
</comment>
<comment type="subcellular location">
    <subcellularLocation>
        <location evidence="2">Cytoplasm</location>
    </subcellularLocation>
</comment>
<comment type="similarity">
    <text evidence="2">Belongs to the arginine deiminase family.</text>
</comment>
<feature type="chain" id="PRO_0000182213" description="Arginine deiminase">
    <location>
        <begin position="1"/>
        <end position="410"/>
    </location>
</feature>
<feature type="active site" description="Amidino-cysteine intermediate" evidence="1">
    <location>
        <position position="400"/>
    </location>
</feature>
<protein>
    <recommendedName>
        <fullName>Arginine deiminase</fullName>
        <shortName>ADI</shortName>
        <ecNumber>3.5.3.6</ecNumber>
    </recommendedName>
    <alternativeName>
        <fullName>Arginine dihydrolase</fullName>
        <shortName>AD</shortName>
    </alternativeName>
</protein>
<organism>
    <name type="scientific">Lactococcus lactis subsp. lactis (strain IL1403)</name>
    <name type="common">Streptococcus lactis</name>
    <dbReference type="NCBI Taxonomy" id="272623"/>
    <lineage>
        <taxon>Bacteria</taxon>
        <taxon>Bacillati</taxon>
        <taxon>Bacillota</taxon>
        <taxon>Bacilli</taxon>
        <taxon>Lactobacillales</taxon>
        <taxon>Streptococcaceae</taxon>
        <taxon>Lactococcus</taxon>
    </lineage>
</organism>
<name>ARCA_LACLA</name>
<dbReference type="EC" id="3.5.3.6"/>
<dbReference type="EMBL" id="AE005176">
    <property type="protein sequence ID" value="AAK06135.1"/>
    <property type="molecule type" value="Genomic_DNA"/>
</dbReference>
<dbReference type="PIR" id="E86879">
    <property type="entry name" value="E86879"/>
</dbReference>
<dbReference type="RefSeq" id="NP_268194.1">
    <property type="nucleotide sequence ID" value="NC_002662.1"/>
</dbReference>
<dbReference type="RefSeq" id="WP_004254504.1">
    <property type="nucleotide sequence ID" value="NC_002662.1"/>
</dbReference>
<dbReference type="SMR" id="P58013"/>
<dbReference type="PaxDb" id="272623-L0329"/>
<dbReference type="EnsemblBacteria" id="AAK06135">
    <property type="protein sequence ID" value="AAK06135"/>
    <property type="gene ID" value="L0329"/>
</dbReference>
<dbReference type="GeneID" id="89634390"/>
<dbReference type="KEGG" id="lla:L0329"/>
<dbReference type="PATRIC" id="fig|272623.7.peg.2194"/>
<dbReference type="eggNOG" id="COG2235">
    <property type="taxonomic scope" value="Bacteria"/>
</dbReference>
<dbReference type="HOGENOM" id="CLU_052662_0_1_9"/>
<dbReference type="OrthoDB" id="9807502at2"/>
<dbReference type="UniPathway" id="UPA00254">
    <property type="reaction ID" value="UER00364"/>
</dbReference>
<dbReference type="Proteomes" id="UP000002196">
    <property type="component" value="Chromosome"/>
</dbReference>
<dbReference type="GO" id="GO:0005737">
    <property type="term" value="C:cytoplasm"/>
    <property type="evidence" value="ECO:0007669"/>
    <property type="project" value="UniProtKB-SubCell"/>
</dbReference>
<dbReference type="GO" id="GO:0016990">
    <property type="term" value="F:arginine deiminase activity"/>
    <property type="evidence" value="ECO:0007669"/>
    <property type="project" value="UniProtKB-UniRule"/>
</dbReference>
<dbReference type="GO" id="GO:0019547">
    <property type="term" value="P:arginine catabolic process to ornithine"/>
    <property type="evidence" value="ECO:0007669"/>
    <property type="project" value="UniProtKB-UniRule"/>
</dbReference>
<dbReference type="GO" id="GO:0019546">
    <property type="term" value="P:arginine deiminase pathway"/>
    <property type="evidence" value="ECO:0007669"/>
    <property type="project" value="TreeGrafter"/>
</dbReference>
<dbReference type="Gene3D" id="1.10.3930.10">
    <property type="entry name" value="Arginine deiminase"/>
    <property type="match status" value="1"/>
</dbReference>
<dbReference type="Gene3D" id="3.75.10.10">
    <property type="entry name" value="L-arginine/glycine Amidinotransferase, Chain A"/>
    <property type="match status" value="1"/>
</dbReference>
<dbReference type="HAMAP" id="MF_00242">
    <property type="entry name" value="Arg_deiminase"/>
    <property type="match status" value="1"/>
</dbReference>
<dbReference type="InterPro" id="IPR003876">
    <property type="entry name" value="Arg_deiminase"/>
</dbReference>
<dbReference type="NCBIfam" id="TIGR01078">
    <property type="entry name" value="arcA"/>
    <property type="match status" value="1"/>
</dbReference>
<dbReference type="NCBIfam" id="NF002381">
    <property type="entry name" value="PRK01388.1"/>
    <property type="match status" value="1"/>
</dbReference>
<dbReference type="PANTHER" id="PTHR47271">
    <property type="entry name" value="ARGININE DEIMINASE"/>
    <property type="match status" value="1"/>
</dbReference>
<dbReference type="PANTHER" id="PTHR47271:SF2">
    <property type="entry name" value="ARGININE DEIMINASE"/>
    <property type="match status" value="1"/>
</dbReference>
<dbReference type="Pfam" id="PF02274">
    <property type="entry name" value="ADI"/>
    <property type="match status" value="1"/>
</dbReference>
<dbReference type="PIRSF" id="PIRSF006356">
    <property type="entry name" value="Arg_deiminase"/>
    <property type="match status" value="1"/>
</dbReference>
<dbReference type="PRINTS" id="PR01466">
    <property type="entry name" value="ARGDEIMINASE"/>
</dbReference>
<dbReference type="SUPFAM" id="SSF55909">
    <property type="entry name" value="Pentein"/>
    <property type="match status" value="1"/>
</dbReference>
<proteinExistence type="inferred from homology"/>